<evidence type="ECO:0000250" key="1"/>
<evidence type="ECO:0000256" key="2">
    <source>
        <dbReference type="SAM" id="MobiDB-lite"/>
    </source>
</evidence>
<evidence type="ECO:0000305" key="3"/>
<name>PAP_DICDI</name>
<feature type="chain" id="PRO_0000330665" description="Poly(A) polymerase">
    <location>
        <begin position="1"/>
        <end position="809"/>
    </location>
</feature>
<feature type="region of interest" description="Disordered" evidence="2">
    <location>
        <begin position="1"/>
        <end position="50"/>
    </location>
</feature>
<feature type="region of interest" description="Disordered" evidence="2">
    <location>
        <begin position="529"/>
        <end position="760"/>
    </location>
</feature>
<feature type="region of interest" description="Disordered" evidence="2">
    <location>
        <begin position="785"/>
        <end position="809"/>
    </location>
</feature>
<feature type="compositionally biased region" description="Low complexity" evidence="2">
    <location>
        <begin position="12"/>
        <end position="25"/>
    </location>
</feature>
<feature type="compositionally biased region" description="Polar residues" evidence="2">
    <location>
        <begin position="26"/>
        <end position="50"/>
    </location>
</feature>
<feature type="compositionally biased region" description="Basic and acidic residues" evidence="2">
    <location>
        <begin position="530"/>
        <end position="540"/>
    </location>
</feature>
<feature type="compositionally biased region" description="Low complexity" evidence="2">
    <location>
        <begin position="572"/>
        <end position="655"/>
    </location>
</feature>
<feature type="compositionally biased region" description="Polar residues" evidence="2">
    <location>
        <begin position="656"/>
        <end position="665"/>
    </location>
</feature>
<feature type="compositionally biased region" description="Low complexity" evidence="2">
    <location>
        <begin position="666"/>
        <end position="706"/>
    </location>
</feature>
<feature type="compositionally biased region" description="Polar residues" evidence="2">
    <location>
        <begin position="707"/>
        <end position="735"/>
    </location>
</feature>
<feature type="compositionally biased region" description="Low complexity" evidence="2">
    <location>
        <begin position="736"/>
        <end position="760"/>
    </location>
</feature>
<feature type="compositionally biased region" description="Low complexity" evidence="2">
    <location>
        <begin position="785"/>
        <end position="794"/>
    </location>
</feature>
<feature type="binding site" evidence="1">
    <location>
        <begin position="133"/>
        <end position="135"/>
    </location>
    <ligand>
        <name>ATP</name>
        <dbReference type="ChEBI" id="CHEBI:30616"/>
    </ligand>
</feature>
<feature type="binding site" evidence="1">
    <location>
        <begin position="146"/>
        <end position="148"/>
    </location>
    <ligand>
        <name>ATP</name>
        <dbReference type="ChEBI" id="CHEBI:30616"/>
    </ligand>
</feature>
<feature type="binding site" evidence="1">
    <location>
        <position position="146"/>
    </location>
    <ligand>
        <name>Mg(2+)</name>
        <dbReference type="ChEBI" id="CHEBI:18420"/>
        <label>1</label>
        <note>catalytic</note>
    </ligand>
</feature>
<feature type="binding site" evidence="1">
    <location>
        <position position="146"/>
    </location>
    <ligand>
        <name>Mg(2+)</name>
        <dbReference type="ChEBI" id="CHEBI:18420"/>
        <label>2</label>
        <note>catalytic</note>
    </ligand>
</feature>
<feature type="binding site" evidence="1">
    <location>
        <position position="148"/>
    </location>
    <ligand>
        <name>Mg(2+)</name>
        <dbReference type="ChEBI" id="CHEBI:18420"/>
        <label>1</label>
        <note>catalytic</note>
    </ligand>
</feature>
<feature type="binding site" evidence="1">
    <location>
        <position position="148"/>
    </location>
    <ligand>
        <name>Mg(2+)</name>
        <dbReference type="ChEBI" id="CHEBI:18420"/>
        <label>2</label>
        <note>catalytic</note>
    </ligand>
</feature>
<feature type="binding site" evidence="1">
    <location>
        <position position="200"/>
    </location>
    <ligand>
        <name>ATP</name>
        <dbReference type="ChEBI" id="CHEBI:30616"/>
    </ligand>
</feature>
<feature type="binding site" evidence="1">
    <location>
        <position position="200"/>
    </location>
    <ligand>
        <name>Mg(2+)</name>
        <dbReference type="ChEBI" id="CHEBI:18420"/>
        <label>2</label>
        <note>catalytic</note>
    </ligand>
</feature>
<feature type="binding site" evidence="1">
    <location>
        <position position="262"/>
    </location>
    <ligand>
        <name>ATP</name>
        <dbReference type="ChEBI" id="CHEBI:30616"/>
    </ligand>
</feature>
<feature type="binding site" evidence="1">
    <location>
        <position position="271"/>
    </location>
    <ligand>
        <name>ATP</name>
        <dbReference type="ChEBI" id="CHEBI:30616"/>
    </ligand>
</feature>
<feature type="binding site" evidence="1">
    <location>
        <begin position="280"/>
        <end position="281"/>
    </location>
    <ligand>
        <name>ATP</name>
        <dbReference type="ChEBI" id="CHEBI:30616"/>
    </ligand>
</feature>
<proteinExistence type="inferred from homology"/>
<dbReference type="EC" id="2.7.7.19"/>
<dbReference type="EMBL" id="AAFI02000109">
    <property type="protein sequence ID" value="EAL63311.1"/>
    <property type="molecule type" value="Genomic_DNA"/>
</dbReference>
<dbReference type="RefSeq" id="XP_636814.1">
    <property type="nucleotide sequence ID" value="XM_631722.1"/>
</dbReference>
<dbReference type="SMR" id="Q54J73"/>
<dbReference type="FunCoup" id="Q54J73">
    <property type="interactions" value="1061"/>
</dbReference>
<dbReference type="STRING" id="44689.Q54J73"/>
<dbReference type="PaxDb" id="44689-DDB0216279"/>
<dbReference type="EnsemblProtists" id="EAL63311">
    <property type="protein sequence ID" value="EAL63311"/>
    <property type="gene ID" value="DDB_G0288259"/>
</dbReference>
<dbReference type="GeneID" id="8626531"/>
<dbReference type="KEGG" id="ddi:DDB_G0288259"/>
<dbReference type="dictyBase" id="DDB_G0288259">
    <property type="gene designation" value="papA"/>
</dbReference>
<dbReference type="VEuPathDB" id="AmoebaDB:DDB_G0288259"/>
<dbReference type="eggNOG" id="KOG2245">
    <property type="taxonomic scope" value="Eukaryota"/>
</dbReference>
<dbReference type="HOGENOM" id="CLU_011511_2_0_1"/>
<dbReference type="InParanoid" id="Q54J73"/>
<dbReference type="OMA" id="WEGWIES"/>
<dbReference type="PhylomeDB" id="Q54J73"/>
<dbReference type="PRO" id="PR:Q54J73"/>
<dbReference type="Proteomes" id="UP000002195">
    <property type="component" value="Chromosome 5"/>
</dbReference>
<dbReference type="GO" id="GO:0005847">
    <property type="term" value="C:mRNA cleavage and polyadenylation specificity factor complex"/>
    <property type="evidence" value="ECO:0000250"/>
    <property type="project" value="dictyBase"/>
</dbReference>
<dbReference type="GO" id="GO:0005634">
    <property type="term" value="C:nucleus"/>
    <property type="evidence" value="ECO:0000318"/>
    <property type="project" value="GO_Central"/>
</dbReference>
<dbReference type="GO" id="GO:0005524">
    <property type="term" value="F:ATP binding"/>
    <property type="evidence" value="ECO:0007669"/>
    <property type="project" value="UniProtKB-KW"/>
</dbReference>
<dbReference type="GO" id="GO:0046872">
    <property type="term" value="F:metal ion binding"/>
    <property type="evidence" value="ECO:0007669"/>
    <property type="project" value="UniProtKB-KW"/>
</dbReference>
<dbReference type="GO" id="GO:1990817">
    <property type="term" value="F:poly(A) RNA polymerase activity"/>
    <property type="evidence" value="ECO:0000250"/>
    <property type="project" value="dictyBase"/>
</dbReference>
<dbReference type="GO" id="GO:0003723">
    <property type="term" value="F:RNA binding"/>
    <property type="evidence" value="ECO:0007669"/>
    <property type="project" value="UniProtKB-KW"/>
</dbReference>
<dbReference type="GO" id="GO:0006397">
    <property type="term" value="P:mRNA processing"/>
    <property type="evidence" value="ECO:0007669"/>
    <property type="project" value="UniProtKB-KW"/>
</dbReference>
<dbReference type="GO" id="GO:0031123">
    <property type="term" value="P:RNA 3'-end processing"/>
    <property type="evidence" value="ECO:0000250"/>
    <property type="project" value="dictyBase"/>
</dbReference>
<dbReference type="CDD" id="cd05402">
    <property type="entry name" value="NT_PAP_TUTase"/>
    <property type="match status" value="1"/>
</dbReference>
<dbReference type="FunFam" id="3.30.460.10:FF:000002">
    <property type="entry name" value="Poly(A) polymerase alpha, putative"/>
    <property type="match status" value="1"/>
</dbReference>
<dbReference type="FunFam" id="1.10.1410.10:FF:000001">
    <property type="entry name" value="Putative poly(A) polymerase gamma"/>
    <property type="match status" value="1"/>
</dbReference>
<dbReference type="Gene3D" id="1.10.1410.10">
    <property type="match status" value="1"/>
</dbReference>
<dbReference type="Gene3D" id="3.30.460.10">
    <property type="entry name" value="Beta Polymerase, domain 2"/>
    <property type="match status" value="1"/>
</dbReference>
<dbReference type="Gene3D" id="3.30.70.590">
    <property type="entry name" value="Poly(A) polymerase predicted RNA binding domain"/>
    <property type="match status" value="1"/>
</dbReference>
<dbReference type="InterPro" id="IPR043519">
    <property type="entry name" value="NT_sf"/>
</dbReference>
<dbReference type="InterPro" id="IPR011068">
    <property type="entry name" value="NuclTrfase_I-like_C"/>
</dbReference>
<dbReference type="InterPro" id="IPR007012">
    <property type="entry name" value="PolA_pol_cen_dom"/>
</dbReference>
<dbReference type="InterPro" id="IPR048840">
    <property type="entry name" value="PolA_pol_NTPase"/>
</dbReference>
<dbReference type="InterPro" id="IPR007010">
    <property type="entry name" value="PolA_pol_RNA-bd_dom"/>
</dbReference>
<dbReference type="PANTHER" id="PTHR10682">
    <property type="entry name" value="POLY A POLYMERASE"/>
    <property type="match status" value="1"/>
</dbReference>
<dbReference type="PANTHER" id="PTHR10682:SF10">
    <property type="entry name" value="POLYNUCLEOTIDE ADENYLYLTRANSFERASE"/>
    <property type="match status" value="1"/>
</dbReference>
<dbReference type="Pfam" id="PF04928">
    <property type="entry name" value="PAP_central"/>
    <property type="match status" value="1"/>
</dbReference>
<dbReference type="Pfam" id="PF20750">
    <property type="entry name" value="PAP_NTPase"/>
    <property type="match status" value="1"/>
</dbReference>
<dbReference type="Pfam" id="PF04926">
    <property type="entry name" value="PAP_RNA-bind"/>
    <property type="match status" value="2"/>
</dbReference>
<dbReference type="SUPFAM" id="SSF81301">
    <property type="entry name" value="Nucleotidyltransferase"/>
    <property type="match status" value="1"/>
</dbReference>
<dbReference type="SUPFAM" id="SSF55003">
    <property type="entry name" value="PAP/Archaeal CCA-adding enzyme, C-terminal domain"/>
    <property type="match status" value="1"/>
</dbReference>
<dbReference type="SUPFAM" id="SSF81631">
    <property type="entry name" value="PAP/OAS1 substrate-binding domain"/>
    <property type="match status" value="1"/>
</dbReference>
<protein>
    <recommendedName>
        <fullName>Poly(A) polymerase</fullName>
        <shortName>PAP</shortName>
        <ecNumber>2.7.7.19</ecNumber>
    </recommendedName>
    <alternativeName>
        <fullName>Polynucleotide adenylyltransferase</fullName>
    </alternativeName>
</protein>
<accession>Q54J73</accession>
<sequence length="809" mass="88686">MNKNGGPPVANITTSSTTITSTTTTQAKSQLPSSLSVNNLHTTQGSTDQPTILGVTEPISTAPPSSIDFKLSTELENTLISFNLFESPEESRKREEILGKLNQIVREWAKQVSLKKGYPEQTASEVVAKIFTFGSYRLGVHGPGSDIDTLCVGPKHIMRSDFFDDLSDILKVHPEITEFTTVKDAFVPVITMVFSGIPIDLIYAKLALTAIPEELNDLIDESFLKNIDEKSILSLNGCRVTDQILKLVPNIPNFRMALRCIKLWAIRRGIYSNILGFLGGVSWALLTARICQLYPNSAPSTIIHRFFKVYEIWKWPAPILLCHIQEGGILGPKVWNPKRDKAHLMPIITPAYPSMNSTYNVSKSTLQLMKSEFVRGAEITRKIETGECTWKNLLEKCDFFTRYSFYIEIDCYSMNEEDSRKWEGWIESKLRFLISNLESTPKMKFAVPYPKGFTNNLHKANNPDQICTSFFMGLSFNFSNTPGADKSVDLTKAVTEFTGIIKDWLRTQPNPDTMDIKVQYIKKKQLPAFVKDEGPEEPVKTTKKRSSTGEPSATRKKLKSENSDNKLNSPKSPITTNINSTPTTSTPTTTANTTTNTTTATTTTTTTTVPITSTPTSNISSPTMNSTELTTPTSTSTTTSNDSITTPPTTTTINSVQPPSAQPTENGSSTSNSPTSTSINNTALPPNPTTNSESTIETTITLPTTLESQTSTLKDSNEISTNGTAVATEPTITSPSVNINESSTSTSTTTTTTVTEQQIQTAPTTATPINKTIVNTMEVNELSFISSSSETSQSKPPPKKPTISIIRGN</sequence>
<comment type="function">
    <text evidence="1">Polymerase that creates the 3'-poly(A) tail of mRNA's. May acquire specificity through interaction with a cleavage and polyadenylation factor (By similarity).</text>
</comment>
<comment type="catalytic activity">
    <reaction>
        <text>RNA(n) + ATP = RNA(n)-3'-adenine ribonucleotide + diphosphate</text>
        <dbReference type="Rhea" id="RHEA:11332"/>
        <dbReference type="Rhea" id="RHEA-COMP:14527"/>
        <dbReference type="Rhea" id="RHEA-COMP:17347"/>
        <dbReference type="ChEBI" id="CHEBI:30616"/>
        <dbReference type="ChEBI" id="CHEBI:33019"/>
        <dbReference type="ChEBI" id="CHEBI:140395"/>
        <dbReference type="ChEBI" id="CHEBI:173115"/>
        <dbReference type="EC" id="2.7.7.19"/>
    </reaction>
</comment>
<comment type="cofactor">
    <cofactor evidence="1">
        <name>Mg(2+)</name>
        <dbReference type="ChEBI" id="CHEBI:18420"/>
    </cofactor>
    <cofactor evidence="1">
        <name>Mn(2+)</name>
        <dbReference type="ChEBI" id="CHEBI:29035"/>
    </cofactor>
    <text evidence="1">Binds 2 magnesium ions. Also active with manganese.</text>
</comment>
<comment type="subcellular location">
    <subcellularLocation>
        <location evidence="1">Nucleus</location>
    </subcellularLocation>
</comment>
<comment type="similarity">
    <text evidence="3">Belongs to the poly(A) polymerase family.</text>
</comment>
<gene>
    <name type="primary">papA</name>
    <name type="ORF">DDB_G0288259</name>
</gene>
<organism>
    <name type="scientific">Dictyostelium discoideum</name>
    <name type="common">Social amoeba</name>
    <dbReference type="NCBI Taxonomy" id="44689"/>
    <lineage>
        <taxon>Eukaryota</taxon>
        <taxon>Amoebozoa</taxon>
        <taxon>Evosea</taxon>
        <taxon>Eumycetozoa</taxon>
        <taxon>Dictyostelia</taxon>
        <taxon>Dictyosteliales</taxon>
        <taxon>Dictyosteliaceae</taxon>
        <taxon>Dictyostelium</taxon>
    </lineage>
</organism>
<keyword id="KW-0067">ATP-binding</keyword>
<keyword id="KW-0460">Magnesium</keyword>
<keyword id="KW-0464">Manganese</keyword>
<keyword id="KW-0479">Metal-binding</keyword>
<keyword id="KW-0507">mRNA processing</keyword>
<keyword id="KW-0547">Nucleotide-binding</keyword>
<keyword id="KW-0539">Nucleus</keyword>
<keyword id="KW-1185">Reference proteome</keyword>
<keyword id="KW-0694">RNA-binding</keyword>
<keyword id="KW-0808">Transferase</keyword>
<reference key="1">
    <citation type="journal article" date="2005" name="Nature">
        <title>The genome of the social amoeba Dictyostelium discoideum.</title>
        <authorList>
            <person name="Eichinger L."/>
            <person name="Pachebat J.A."/>
            <person name="Gloeckner G."/>
            <person name="Rajandream M.A."/>
            <person name="Sucgang R."/>
            <person name="Berriman M."/>
            <person name="Song J."/>
            <person name="Olsen R."/>
            <person name="Szafranski K."/>
            <person name="Xu Q."/>
            <person name="Tunggal B."/>
            <person name="Kummerfeld S."/>
            <person name="Madera M."/>
            <person name="Konfortov B.A."/>
            <person name="Rivero F."/>
            <person name="Bankier A.T."/>
            <person name="Lehmann R."/>
            <person name="Hamlin N."/>
            <person name="Davies R."/>
            <person name="Gaudet P."/>
            <person name="Fey P."/>
            <person name="Pilcher K."/>
            <person name="Chen G."/>
            <person name="Saunders D."/>
            <person name="Sodergren E.J."/>
            <person name="Davis P."/>
            <person name="Kerhornou A."/>
            <person name="Nie X."/>
            <person name="Hall N."/>
            <person name="Anjard C."/>
            <person name="Hemphill L."/>
            <person name="Bason N."/>
            <person name="Farbrother P."/>
            <person name="Desany B."/>
            <person name="Just E."/>
            <person name="Morio T."/>
            <person name="Rost R."/>
            <person name="Churcher C.M."/>
            <person name="Cooper J."/>
            <person name="Haydock S."/>
            <person name="van Driessche N."/>
            <person name="Cronin A."/>
            <person name="Goodhead I."/>
            <person name="Muzny D.M."/>
            <person name="Mourier T."/>
            <person name="Pain A."/>
            <person name="Lu M."/>
            <person name="Harper D."/>
            <person name="Lindsay R."/>
            <person name="Hauser H."/>
            <person name="James K.D."/>
            <person name="Quiles M."/>
            <person name="Madan Babu M."/>
            <person name="Saito T."/>
            <person name="Buchrieser C."/>
            <person name="Wardroper A."/>
            <person name="Felder M."/>
            <person name="Thangavelu M."/>
            <person name="Johnson D."/>
            <person name="Knights A."/>
            <person name="Loulseged H."/>
            <person name="Mungall K.L."/>
            <person name="Oliver K."/>
            <person name="Price C."/>
            <person name="Quail M.A."/>
            <person name="Urushihara H."/>
            <person name="Hernandez J."/>
            <person name="Rabbinowitsch E."/>
            <person name="Steffen D."/>
            <person name="Sanders M."/>
            <person name="Ma J."/>
            <person name="Kohara Y."/>
            <person name="Sharp S."/>
            <person name="Simmonds M.N."/>
            <person name="Spiegler S."/>
            <person name="Tivey A."/>
            <person name="Sugano S."/>
            <person name="White B."/>
            <person name="Walker D."/>
            <person name="Woodward J.R."/>
            <person name="Winckler T."/>
            <person name="Tanaka Y."/>
            <person name="Shaulsky G."/>
            <person name="Schleicher M."/>
            <person name="Weinstock G.M."/>
            <person name="Rosenthal A."/>
            <person name="Cox E.C."/>
            <person name="Chisholm R.L."/>
            <person name="Gibbs R.A."/>
            <person name="Loomis W.F."/>
            <person name="Platzer M."/>
            <person name="Kay R.R."/>
            <person name="Williams J.G."/>
            <person name="Dear P.H."/>
            <person name="Noegel A.A."/>
            <person name="Barrell B.G."/>
            <person name="Kuspa A."/>
        </authorList>
    </citation>
    <scope>NUCLEOTIDE SEQUENCE [LARGE SCALE GENOMIC DNA]</scope>
    <source>
        <strain>AX4</strain>
    </source>
</reference>